<dbReference type="EC" id="4.2.1.-" evidence="1"/>
<dbReference type="EMBL" id="Z17373">
    <property type="protein sequence ID" value="CAA78989.1"/>
    <property type="status" value="ALT_INIT"/>
    <property type="molecule type" value="Genomic_DNA"/>
</dbReference>
<dbReference type="EMBL" id="BA000040">
    <property type="protein sequence ID" value="BAC52192.1"/>
    <property type="molecule type" value="Genomic_DNA"/>
</dbReference>
<dbReference type="RefSeq" id="NP_773567.1">
    <property type="nucleotide sequence ID" value="NC_004463.1"/>
</dbReference>
<dbReference type="RefSeq" id="WP_011089665.1">
    <property type="nucleotide sequence ID" value="NC_004463.1"/>
</dbReference>
<dbReference type="SMR" id="P31906"/>
<dbReference type="FunCoup" id="P31906">
    <property type="interactions" value="101"/>
</dbReference>
<dbReference type="STRING" id="224911.AAV28_32225"/>
<dbReference type="EnsemblBacteria" id="BAC52192">
    <property type="protein sequence ID" value="BAC52192"/>
    <property type="gene ID" value="BAC52192"/>
</dbReference>
<dbReference type="GeneID" id="46493893"/>
<dbReference type="KEGG" id="bja:bll6927"/>
<dbReference type="PATRIC" id="fig|224911.44.peg.6961"/>
<dbReference type="eggNOG" id="COG0309">
    <property type="taxonomic scope" value="Bacteria"/>
</dbReference>
<dbReference type="HOGENOM" id="CLU_049733_0_0_5"/>
<dbReference type="InParanoid" id="P31906"/>
<dbReference type="OrthoDB" id="9801934at2"/>
<dbReference type="PhylomeDB" id="P31906"/>
<dbReference type="UniPathway" id="UPA00335"/>
<dbReference type="Proteomes" id="UP000002526">
    <property type="component" value="Chromosome"/>
</dbReference>
<dbReference type="GO" id="GO:0016829">
    <property type="term" value="F:lyase activity"/>
    <property type="evidence" value="ECO:0007669"/>
    <property type="project" value="UniProtKB-KW"/>
</dbReference>
<dbReference type="GO" id="GO:0051604">
    <property type="term" value="P:protein maturation"/>
    <property type="evidence" value="ECO:0000318"/>
    <property type="project" value="GO_Central"/>
</dbReference>
<dbReference type="CDD" id="cd02197">
    <property type="entry name" value="HypE"/>
    <property type="match status" value="1"/>
</dbReference>
<dbReference type="Gene3D" id="3.90.650.10">
    <property type="entry name" value="PurM-like C-terminal domain"/>
    <property type="match status" value="1"/>
</dbReference>
<dbReference type="Gene3D" id="3.30.1330.10">
    <property type="entry name" value="PurM-like, N-terminal domain"/>
    <property type="match status" value="1"/>
</dbReference>
<dbReference type="InterPro" id="IPR011854">
    <property type="entry name" value="HypE"/>
</dbReference>
<dbReference type="InterPro" id="IPR010918">
    <property type="entry name" value="PurM-like_C_dom"/>
</dbReference>
<dbReference type="InterPro" id="IPR036676">
    <property type="entry name" value="PurM-like_C_sf"/>
</dbReference>
<dbReference type="InterPro" id="IPR016188">
    <property type="entry name" value="PurM-like_N"/>
</dbReference>
<dbReference type="InterPro" id="IPR036921">
    <property type="entry name" value="PurM-like_N_sf"/>
</dbReference>
<dbReference type="NCBIfam" id="TIGR02124">
    <property type="entry name" value="hypE"/>
    <property type="match status" value="1"/>
</dbReference>
<dbReference type="PANTHER" id="PTHR30303:SF0">
    <property type="entry name" value="CARBAMOYL DEHYDRATASE HYPE"/>
    <property type="match status" value="1"/>
</dbReference>
<dbReference type="PANTHER" id="PTHR30303">
    <property type="entry name" value="HYDROGENASE ISOENZYMES FORMATION PROTEIN HYPE"/>
    <property type="match status" value="1"/>
</dbReference>
<dbReference type="Pfam" id="PF00586">
    <property type="entry name" value="AIRS"/>
    <property type="match status" value="1"/>
</dbReference>
<dbReference type="Pfam" id="PF02769">
    <property type="entry name" value="AIRS_C"/>
    <property type="match status" value="1"/>
</dbReference>
<dbReference type="PIRSF" id="PIRSF005644">
    <property type="entry name" value="Hdrgns_mtr_HypE"/>
    <property type="match status" value="1"/>
</dbReference>
<dbReference type="SUPFAM" id="SSF56042">
    <property type="entry name" value="PurM C-terminal domain-like"/>
    <property type="match status" value="1"/>
</dbReference>
<dbReference type="SUPFAM" id="SSF55326">
    <property type="entry name" value="PurM N-terminal domain-like"/>
    <property type="match status" value="1"/>
</dbReference>
<comment type="function">
    <text evidence="1">Involved in the maturation of [NiFe] hydrogenases. Along with HypF, it catalyzes the synthesis of the CN ligands of the active site iron of [NiFe]-hydrogenases. HypE catalyzes the ATP-dependent dehydration of the carboxamido group attached to its C-terminal cysteine to a cyano group.</text>
</comment>
<comment type="catalytic activity">
    <reaction evidence="1">
        <text>C-terminal S-carboxamide-L-cysteinyl-[HypE protein] + ATP = C-terminal S-cyanate-L-cysteinyl-[HypE protein] + ADP + phosphate + H(+)</text>
        <dbReference type="Rhea" id="RHEA:55644"/>
        <dbReference type="Rhea" id="RHEA-COMP:14247"/>
        <dbReference type="Rhea" id="RHEA-COMP:14248"/>
        <dbReference type="ChEBI" id="CHEBI:15378"/>
        <dbReference type="ChEBI" id="CHEBI:30616"/>
        <dbReference type="ChEBI" id="CHEBI:43474"/>
        <dbReference type="ChEBI" id="CHEBI:139126"/>
        <dbReference type="ChEBI" id="CHEBI:139127"/>
        <dbReference type="ChEBI" id="CHEBI:456216"/>
    </reaction>
</comment>
<comment type="pathway">
    <text evidence="1">Protein modification; [NiFe] hydrogenase maturation.</text>
</comment>
<comment type="PTM">
    <text evidence="1">Modified by HypF, which adds a carboxamido group to the thiolate of the C-terminal cysteine, yielding a protein-S-carboxamide. The carboxamido group is then dehydrated by HypE itself to yield a protein-thiocyanate.</text>
</comment>
<comment type="similarity">
    <text evidence="2">Belongs to the HypE family.</text>
</comment>
<comment type="sequence caution" evidence="2">
    <conflict type="erroneous initiation">
        <sequence resource="EMBL-CDS" id="CAA78989"/>
    </conflict>
</comment>
<sequence>MKAYQRKLDIRNGCVDLSHGSGGRAMAQLISGLFHEAFGNEWLARGNDQSAFDVRAGRMVMTTDGYVVSPLFFPGGNIGSLAVHGTVNDIAMAGAKPLYLSASFIIEEGFRFADLKLIAESMGAAAREADVHIITGDTKVVERGKADGLFISTAGVGVVPDGLDLSAEKARVGDRVLISGTLGDHGVAIMSKRQNLAFETEIVSDSASLHDLVARMVQAGGRGIRLMRDPTRGGLAATLNEIAQQSNLGFHLLEEAIPVKPGVAAACELLGLDPLHVANEGKLVAIVAPEAAGAVLAAMRAHPLGRDAADIGEAVADDHHFVQMATSFGGGRIVDWLSGEQLPRIC</sequence>
<proteinExistence type="inferred from homology"/>
<gene>
    <name type="primary">hypE</name>
    <name type="ordered locus">bll6927</name>
</gene>
<name>HYPE_BRADU</name>
<feature type="chain" id="PRO_0000201458" description="Carbamoyl dehydratase HypE">
    <location>
        <begin position="1"/>
        <end position="346"/>
    </location>
</feature>
<feature type="modified residue" description="S-carbamoylcysteine" evidence="1">
    <location>
        <position position="346"/>
    </location>
</feature>
<feature type="modified residue" description="S-cyanocysteine" evidence="1">
    <location>
        <position position="346"/>
    </location>
</feature>
<feature type="sequence conflict" description="In Ref. 1." evidence="2" ref="1">
    <original>S</original>
    <variation>C</variation>
    <location>
        <position position="21"/>
    </location>
</feature>
<organism>
    <name type="scientific">Bradyrhizobium diazoefficiens (strain JCM 10833 / BCRC 13528 / IAM 13628 / NBRC 14792 / USDA 110)</name>
    <dbReference type="NCBI Taxonomy" id="224911"/>
    <lineage>
        <taxon>Bacteria</taxon>
        <taxon>Pseudomonadati</taxon>
        <taxon>Pseudomonadota</taxon>
        <taxon>Alphaproteobacteria</taxon>
        <taxon>Hyphomicrobiales</taxon>
        <taxon>Nitrobacteraceae</taxon>
        <taxon>Bradyrhizobium</taxon>
    </lineage>
</organism>
<keyword id="KW-0456">Lyase</keyword>
<keyword id="KW-1185">Reference proteome</keyword>
<reference key="1">
    <citation type="journal article" date="1993" name="Mol. Gen. Genet.">
        <title>Identification of a potential transcriptional regulator of hydrogenase activity in free-living Bradyrhizobium japonicum strains.</title>
        <authorList>
            <person name="van Soom C."/>
            <person name="Verreth C."/>
            <person name="Sampaio M.J."/>
            <person name="Vanderleyden J."/>
        </authorList>
    </citation>
    <scope>NUCLEOTIDE SEQUENCE [GENOMIC DNA]</scope>
    <source>
        <strain>CB1809</strain>
    </source>
</reference>
<reference key="2">
    <citation type="journal article" date="1994" name="J. Mol. Biol.">
        <title>The hypE gene completes the gene cluster for H2-oxidation in Azotobacter vinelandii.</title>
        <authorList>
            <person name="Garg R.P."/>
            <person name="Menon A.L."/>
            <person name="Jacobs K."/>
            <person name="Robson R.M."/>
            <person name="Robson R.L."/>
        </authorList>
    </citation>
    <scope>SEQUENCE REVISION TO N-TERMINUS</scope>
</reference>
<reference key="3">
    <citation type="journal article" date="2002" name="DNA Res.">
        <title>Complete genomic sequence of nitrogen-fixing symbiotic bacterium Bradyrhizobium japonicum USDA110.</title>
        <authorList>
            <person name="Kaneko T."/>
            <person name="Nakamura Y."/>
            <person name="Sato S."/>
            <person name="Minamisawa K."/>
            <person name="Uchiumi T."/>
            <person name="Sasamoto S."/>
            <person name="Watanabe A."/>
            <person name="Idesawa K."/>
            <person name="Iriguchi M."/>
            <person name="Kawashima K."/>
            <person name="Kohara M."/>
            <person name="Matsumoto M."/>
            <person name="Shimpo S."/>
            <person name="Tsuruoka H."/>
            <person name="Wada T."/>
            <person name="Yamada M."/>
            <person name="Tabata S."/>
        </authorList>
    </citation>
    <scope>NUCLEOTIDE SEQUENCE [LARGE SCALE GENOMIC DNA]</scope>
    <source>
        <strain>JCM 10833 / BCRC 13528 / IAM 13628 / NBRC 14792 / USDA 110</strain>
    </source>
</reference>
<evidence type="ECO:0000250" key="1">
    <source>
        <dbReference type="UniProtKB" id="P24193"/>
    </source>
</evidence>
<evidence type="ECO:0000305" key="2"/>
<accession>P31906</accession>
<protein>
    <recommendedName>
        <fullName evidence="1">Carbamoyl dehydratase HypE</fullName>
        <ecNumber evidence="1">4.2.1.-</ecNumber>
    </recommendedName>
    <alternativeName>
        <fullName evidence="1">Hydrogenase maturation factor HypE</fullName>
    </alternativeName>
</protein>